<evidence type="ECO:0000255" key="1">
    <source>
        <dbReference type="HAMAP-Rule" id="MF_01049"/>
    </source>
</evidence>
<reference key="1">
    <citation type="journal article" date="2011" name="J. Bacteriol.">
        <title>Comparative genomics of 28 Salmonella enterica isolates: evidence for CRISPR-mediated adaptive sublineage evolution.</title>
        <authorList>
            <person name="Fricke W.F."/>
            <person name="Mammel M.K."/>
            <person name="McDermott P.F."/>
            <person name="Tartera C."/>
            <person name="White D.G."/>
            <person name="Leclerc J.E."/>
            <person name="Ravel J."/>
            <person name="Cebula T.A."/>
        </authorList>
    </citation>
    <scope>NUCLEOTIDE SEQUENCE [LARGE SCALE GENOMIC DNA]</scope>
    <source>
        <strain>SL254</strain>
    </source>
</reference>
<proteinExistence type="inferred from homology"/>
<name>CAIT_SALNS</name>
<protein>
    <recommendedName>
        <fullName evidence="1">L-carnitine/gamma-butyrobetaine antiporter</fullName>
    </recommendedName>
</protein>
<organism>
    <name type="scientific">Salmonella newport (strain SL254)</name>
    <dbReference type="NCBI Taxonomy" id="423368"/>
    <lineage>
        <taxon>Bacteria</taxon>
        <taxon>Pseudomonadati</taxon>
        <taxon>Pseudomonadota</taxon>
        <taxon>Gammaproteobacteria</taxon>
        <taxon>Enterobacterales</taxon>
        <taxon>Enterobacteriaceae</taxon>
        <taxon>Salmonella</taxon>
    </lineage>
</organism>
<keyword id="KW-0050">Antiport</keyword>
<keyword id="KW-0997">Cell inner membrane</keyword>
<keyword id="KW-1003">Cell membrane</keyword>
<keyword id="KW-0472">Membrane</keyword>
<keyword id="KW-0812">Transmembrane</keyword>
<keyword id="KW-1133">Transmembrane helix</keyword>
<keyword id="KW-0813">Transport</keyword>
<dbReference type="EMBL" id="CP001113">
    <property type="protein sequence ID" value="ACF64613.1"/>
    <property type="molecule type" value="Genomic_DNA"/>
</dbReference>
<dbReference type="RefSeq" id="WP_000787073.1">
    <property type="nucleotide sequence ID" value="NZ_CCMR01000003.1"/>
</dbReference>
<dbReference type="SMR" id="B4T6J9"/>
<dbReference type="KEGG" id="see:SNSL254_A0078"/>
<dbReference type="HOGENOM" id="CLU_010118_6_0_6"/>
<dbReference type="UniPathway" id="UPA00117"/>
<dbReference type="Proteomes" id="UP000008824">
    <property type="component" value="Chromosome"/>
</dbReference>
<dbReference type="GO" id="GO:0005886">
    <property type="term" value="C:plasma membrane"/>
    <property type="evidence" value="ECO:0007669"/>
    <property type="project" value="UniProtKB-SubCell"/>
</dbReference>
<dbReference type="GO" id="GO:0044667">
    <property type="term" value="F:(R)-carnitine:4-(trimethylammonio)butanoate antiporter activity"/>
    <property type="evidence" value="ECO:0007669"/>
    <property type="project" value="UniProtKB-UniRule"/>
</dbReference>
<dbReference type="GO" id="GO:1900751">
    <property type="term" value="P:4-(trimethylammonio)butanoate transport"/>
    <property type="evidence" value="ECO:0007669"/>
    <property type="project" value="InterPro"/>
</dbReference>
<dbReference type="GO" id="GO:0009437">
    <property type="term" value="P:carnitine metabolic process"/>
    <property type="evidence" value="ECO:0007669"/>
    <property type="project" value="UniProtKB-UniRule"/>
</dbReference>
<dbReference type="HAMAP" id="MF_01049">
    <property type="entry name" value="CaiT"/>
    <property type="match status" value="1"/>
</dbReference>
<dbReference type="InterPro" id="IPR018093">
    <property type="entry name" value="BCCT_CS"/>
</dbReference>
<dbReference type="InterPro" id="IPR000060">
    <property type="entry name" value="BCCT_transptr"/>
</dbReference>
<dbReference type="InterPro" id="IPR023449">
    <property type="entry name" value="BCCT_transptr_CaiT"/>
</dbReference>
<dbReference type="NCBIfam" id="TIGR00842">
    <property type="entry name" value="bcct"/>
    <property type="match status" value="1"/>
</dbReference>
<dbReference type="NCBIfam" id="NF002887">
    <property type="entry name" value="PRK03356.1"/>
    <property type="match status" value="1"/>
</dbReference>
<dbReference type="PANTHER" id="PTHR30047">
    <property type="entry name" value="HIGH-AFFINITY CHOLINE TRANSPORT PROTEIN-RELATED"/>
    <property type="match status" value="1"/>
</dbReference>
<dbReference type="PANTHER" id="PTHR30047:SF11">
    <property type="entry name" value="L-CARNITINE_GAMMA-BUTYROBETAINE ANTIPORTER"/>
    <property type="match status" value="1"/>
</dbReference>
<dbReference type="Pfam" id="PF02028">
    <property type="entry name" value="BCCT"/>
    <property type="match status" value="1"/>
</dbReference>
<dbReference type="PROSITE" id="PS01303">
    <property type="entry name" value="BCCT"/>
    <property type="match status" value="1"/>
</dbReference>
<accession>B4T6J9</accession>
<comment type="function">
    <text evidence="1">Catalyzes the exchange of L-carnitine for gamma-butyrobetaine.</text>
</comment>
<comment type="catalytic activity">
    <reaction evidence="1">
        <text>4-(trimethylamino)butanoate(in) + (R)-carnitine(out) = 4-(trimethylamino)butanoate(out) + (R)-carnitine(in)</text>
        <dbReference type="Rhea" id="RHEA:29427"/>
        <dbReference type="ChEBI" id="CHEBI:16244"/>
        <dbReference type="ChEBI" id="CHEBI:16347"/>
    </reaction>
</comment>
<comment type="pathway">
    <text evidence="1">Amine and polyamine metabolism; carnitine metabolism.</text>
</comment>
<comment type="subunit">
    <text evidence="1">Homotrimer.</text>
</comment>
<comment type="subcellular location">
    <subcellularLocation>
        <location evidence="1">Cell inner membrane</location>
        <topology evidence="1">Multi-pass membrane protein</topology>
    </subcellularLocation>
</comment>
<comment type="similarity">
    <text evidence="1">Belongs to the BCCT transporter (TC 2.A.15) family. CaiT subfamily.</text>
</comment>
<sequence>MKNEKKKSGIEPKVFFPPLIIVGILCWLTVRDLDAANVVINAVFSYVTNVWGWAFEWYMVVMLFGWFWLVFGPYAKKRLGDEKPEFSTASWIFMMFASCTSAAVLFWGSIEIYYYISTPPFGLEPNSTGAKEIGLAYSLFHWGPLPWATYSFLSVAFAYFFFVRKMDVIRPSSTLVPLVGEKHAKGLFGTIVDNFYLVALIFAMGTSLGLATPLVTECMQWLFGIPHTLQLDAIIITCWIILNAICVACGLQKGVRIASDVRSYLSFLMLGWVFIVSGASFIMNYFTDSVGMLLMHLPRMLFYTDAIGKGGFPQGWTVFYWAWWVIYAIQMSIFLARISRGRTVRELCFGMVMGLTASTWILWTVLGSNTLLLMDKNILNIPQLIEQHGVARAIIETWAALPLSTATMWGFFILCFIATVTLINACSYTLAMSTCREVRDGEEPPLLVRIGWSVLVGIIGIVLLALGGLKPIQTAIIAGGCPLFFVNIMVTLSFIKDAKVHWKDK</sequence>
<feature type="chain" id="PRO_1000136242" description="L-carnitine/gamma-butyrobetaine antiporter">
    <location>
        <begin position="1"/>
        <end position="505"/>
    </location>
</feature>
<feature type="transmembrane region" description="Helical" evidence="1">
    <location>
        <begin position="10"/>
        <end position="30"/>
    </location>
</feature>
<feature type="transmembrane region" description="Helical" evidence="1">
    <location>
        <begin position="51"/>
        <end position="71"/>
    </location>
</feature>
<feature type="transmembrane region" description="Helical" evidence="1">
    <location>
        <begin position="92"/>
        <end position="112"/>
    </location>
</feature>
<feature type="transmembrane region" description="Helical" evidence="1">
    <location>
        <begin position="143"/>
        <end position="163"/>
    </location>
</feature>
<feature type="transmembrane region" description="Helical" evidence="1">
    <location>
        <begin position="195"/>
        <end position="215"/>
    </location>
</feature>
<feature type="transmembrane region" description="Helical" evidence="1">
    <location>
        <begin position="231"/>
        <end position="251"/>
    </location>
</feature>
<feature type="transmembrane region" description="Helical" evidence="1">
    <location>
        <begin position="263"/>
        <end position="283"/>
    </location>
</feature>
<feature type="transmembrane region" description="Helical" evidence="1">
    <location>
        <begin position="316"/>
        <end position="336"/>
    </location>
</feature>
<feature type="transmembrane region" description="Helical" evidence="1">
    <location>
        <begin position="347"/>
        <end position="367"/>
    </location>
</feature>
<feature type="transmembrane region" description="Helical" evidence="1">
    <location>
        <begin position="403"/>
        <end position="423"/>
    </location>
</feature>
<feature type="transmembrane region" description="Helical" evidence="1">
    <location>
        <begin position="446"/>
        <end position="466"/>
    </location>
</feature>
<feature type="transmembrane region" description="Helical" evidence="1">
    <location>
        <begin position="475"/>
        <end position="495"/>
    </location>
</feature>
<gene>
    <name evidence="1" type="primary">caiT</name>
    <name type="ordered locus">SNSL254_A0078</name>
</gene>